<reference key="1">
    <citation type="journal article" date="2007" name="Genes Dev.">
        <title>New insights into Acinetobacter baumannii pathogenesis revealed by high-density pyrosequencing and transposon mutagenesis.</title>
        <authorList>
            <person name="Smith M.G."/>
            <person name="Gianoulis T.A."/>
            <person name="Pukatzki S."/>
            <person name="Mekalanos J.J."/>
            <person name="Ornston L.N."/>
            <person name="Gerstein M."/>
            <person name="Snyder M."/>
        </authorList>
    </citation>
    <scope>NUCLEOTIDE SEQUENCE [LARGE SCALE GENOMIC DNA]</scope>
    <source>
        <strain>ATCC 17978 / DSM 105126 / CIP 53.77 / LMG 1025 / NCDC KC755 / 5377</strain>
    </source>
</reference>
<evidence type="ECO:0000255" key="1">
    <source>
        <dbReference type="HAMAP-Rule" id="MF_01522"/>
    </source>
</evidence>
<feature type="chain" id="PRO_0000292614" description="Probable potassium transport system protein Kup">
    <location>
        <begin position="1"/>
        <end position="625"/>
    </location>
</feature>
<feature type="transmembrane region" description="Helical" evidence="1">
    <location>
        <begin position="13"/>
        <end position="33"/>
    </location>
</feature>
<feature type="transmembrane region" description="Helical" evidence="1">
    <location>
        <begin position="53"/>
        <end position="73"/>
    </location>
</feature>
<feature type="transmembrane region" description="Helical" evidence="1">
    <location>
        <begin position="103"/>
        <end position="123"/>
    </location>
</feature>
<feature type="transmembrane region" description="Helical" evidence="1">
    <location>
        <begin position="141"/>
        <end position="161"/>
    </location>
</feature>
<feature type="transmembrane region" description="Helical" evidence="1">
    <location>
        <begin position="172"/>
        <end position="192"/>
    </location>
</feature>
<feature type="transmembrane region" description="Helical" evidence="1">
    <location>
        <begin position="206"/>
        <end position="226"/>
    </location>
</feature>
<feature type="transmembrane region" description="Helical" evidence="1">
    <location>
        <begin position="250"/>
        <end position="270"/>
    </location>
</feature>
<feature type="transmembrane region" description="Helical" evidence="1">
    <location>
        <begin position="282"/>
        <end position="302"/>
    </location>
</feature>
<feature type="transmembrane region" description="Helical" evidence="1">
    <location>
        <begin position="340"/>
        <end position="360"/>
    </location>
</feature>
<feature type="transmembrane region" description="Helical" evidence="1">
    <location>
        <begin position="369"/>
        <end position="389"/>
    </location>
</feature>
<feature type="transmembrane region" description="Helical" evidence="1">
    <location>
        <begin position="400"/>
        <end position="420"/>
    </location>
</feature>
<feature type="transmembrane region" description="Helical" evidence="1">
    <location>
        <begin position="422"/>
        <end position="442"/>
    </location>
</feature>
<proteinExistence type="inferred from homology"/>
<accession>A3M9P9</accession>
<gene>
    <name evidence="1" type="primary">kup</name>
    <name type="ordered locus">A1S_3254</name>
</gene>
<sequence length="625" mass="68892">MQNTAKKATLPATALAALGVVFGDIGTSPLYALKESFHAAHGLGIQPENVLGILSIIFWCLMLIISIKYVAIVMRADNNGEGGIMALLALNLRKAKIADNKKIYMIAIGFIGASLFFGDGIITPAISVLSAVEGLSIATDVFDPFIMPIAIAIIVTLFLVQKHGTAFVGKFFGPITLVWFLSLGILGIHSVIQTPVVLGMFSPHWAIQFIYHHPIMTFFVMGAVVLTVTGGEALYADMGHFGPVPIRLAWFFVVLPCLVLNYAGQGALLLRDPAAIENPFYLLVPQWALYPMIIMATMATVIASQAVISGVFSLARQAIQLGYLPRLSIKHTSESEEGQIYVPFLNWLLLIAIIILILIFKTSSNLASAYGLAVTLTMLCDTILVAVFIYSAWKWSLPKVLLLIIPFFILESVLVGATSLKILSGGWVPLLIGAIAVTILMTWKRGRELTFAKLEHDTLSLDLFVKSIGNSVHWVPGDAVFMTGTPNVVPHAMLHNIKHNKVLHQRNILVTVVIEDVPFVAPEERITTETLAEHFFRIKIFYGFKDEMNVPKALMQAYEQLGLEYDLMHISFFISRDRIVHSVGDGMSPWREKLFISMQRNTSPVSDFYQIPTNRVVELGSQIEI</sequence>
<organism>
    <name type="scientific">Acinetobacter baumannii (strain ATCC 17978 / DSM 105126 / CIP 53.77 / LMG 1025 / NCDC KC755 / 5377)</name>
    <dbReference type="NCBI Taxonomy" id="400667"/>
    <lineage>
        <taxon>Bacteria</taxon>
        <taxon>Pseudomonadati</taxon>
        <taxon>Pseudomonadota</taxon>
        <taxon>Gammaproteobacteria</taxon>
        <taxon>Moraxellales</taxon>
        <taxon>Moraxellaceae</taxon>
        <taxon>Acinetobacter</taxon>
        <taxon>Acinetobacter calcoaceticus/baumannii complex</taxon>
    </lineage>
</organism>
<keyword id="KW-0997">Cell inner membrane</keyword>
<keyword id="KW-1003">Cell membrane</keyword>
<keyword id="KW-0406">Ion transport</keyword>
<keyword id="KW-0472">Membrane</keyword>
<keyword id="KW-0630">Potassium</keyword>
<keyword id="KW-0633">Potassium transport</keyword>
<keyword id="KW-0769">Symport</keyword>
<keyword id="KW-0812">Transmembrane</keyword>
<keyword id="KW-1133">Transmembrane helix</keyword>
<keyword id="KW-0813">Transport</keyword>
<name>KUP_ACIBT</name>
<protein>
    <recommendedName>
        <fullName evidence="1">Probable potassium transport system protein Kup</fullName>
    </recommendedName>
</protein>
<dbReference type="EMBL" id="CP000521">
    <property type="protein sequence ID" value="ABO13643.2"/>
    <property type="molecule type" value="Genomic_DNA"/>
</dbReference>
<dbReference type="RefSeq" id="WP_001181667.1">
    <property type="nucleotide sequence ID" value="NZ_CP053098.1"/>
</dbReference>
<dbReference type="KEGG" id="acb:A1S_3254"/>
<dbReference type="HOGENOM" id="CLU_008142_4_2_6"/>
<dbReference type="GO" id="GO:0005886">
    <property type="term" value="C:plasma membrane"/>
    <property type="evidence" value="ECO:0007669"/>
    <property type="project" value="UniProtKB-SubCell"/>
</dbReference>
<dbReference type="GO" id="GO:0015079">
    <property type="term" value="F:potassium ion transmembrane transporter activity"/>
    <property type="evidence" value="ECO:0007669"/>
    <property type="project" value="UniProtKB-UniRule"/>
</dbReference>
<dbReference type="GO" id="GO:0015293">
    <property type="term" value="F:symporter activity"/>
    <property type="evidence" value="ECO:0007669"/>
    <property type="project" value="UniProtKB-UniRule"/>
</dbReference>
<dbReference type="HAMAP" id="MF_01522">
    <property type="entry name" value="Kup"/>
    <property type="match status" value="1"/>
</dbReference>
<dbReference type="InterPro" id="IPR003855">
    <property type="entry name" value="K+_transporter"/>
</dbReference>
<dbReference type="InterPro" id="IPR053952">
    <property type="entry name" value="K_trans_C"/>
</dbReference>
<dbReference type="InterPro" id="IPR053951">
    <property type="entry name" value="K_trans_N"/>
</dbReference>
<dbReference type="InterPro" id="IPR023051">
    <property type="entry name" value="Kup"/>
</dbReference>
<dbReference type="PANTHER" id="PTHR30540:SF79">
    <property type="entry name" value="LOW AFFINITY POTASSIUM TRANSPORT SYSTEM PROTEIN KUP"/>
    <property type="match status" value="1"/>
</dbReference>
<dbReference type="PANTHER" id="PTHR30540">
    <property type="entry name" value="OSMOTIC STRESS POTASSIUM TRANSPORTER"/>
    <property type="match status" value="1"/>
</dbReference>
<dbReference type="Pfam" id="PF02705">
    <property type="entry name" value="K_trans"/>
    <property type="match status" value="1"/>
</dbReference>
<dbReference type="Pfam" id="PF22776">
    <property type="entry name" value="K_trans_C"/>
    <property type="match status" value="1"/>
</dbReference>
<comment type="function">
    <text evidence="1">Transport of potassium into the cell. Likely operates as a K(+):H(+) symporter.</text>
</comment>
<comment type="catalytic activity">
    <reaction evidence="1">
        <text>K(+)(in) + H(+)(in) = K(+)(out) + H(+)(out)</text>
        <dbReference type="Rhea" id="RHEA:28490"/>
        <dbReference type="ChEBI" id="CHEBI:15378"/>
        <dbReference type="ChEBI" id="CHEBI:29103"/>
    </reaction>
    <physiologicalReaction direction="right-to-left" evidence="1">
        <dbReference type="Rhea" id="RHEA:28492"/>
    </physiologicalReaction>
</comment>
<comment type="subcellular location">
    <subcellularLocation>
        <location evidence="1">Cell inner membrane</location>
        <topology evidence="1">Multi-pass membrane protein</topology>
    </subcellularLocation>
</comment>
<comment type="similarity">
    <text evidence="1">Belongs to the HAK/KUP transporter (TC 2.A.72) family.</text>
</comment>